<comment type="function">
    <text evidence="1 2">Its primary physiological function is unclear. Has cytoprotective activity against internal or environmental stresses. May play a role in neuronal development and synaptic plasticity. May be required for neuronal myelin sheath maintenance. May play a role in iron uptake and iron homeostasis. Soluble oligomers are toxic to cultured neuroblastoma cells and induce apoptosis (in vitro). Association with GPC1 (via its heparan sulfate chains) targets PRNP to lipid rafts. Also provides Cu(2+) or Zn(2+) for the ascorbate-mediated GPC1 deaminase degradation of its heparan sulfate side chains (By similarity).</text>
</comment>
<comment type="subunit">
    <text evidence="1 2">Monomer and homodimer. Has a tendency to aggregate into amyloid fibrils containing a cross-beta spine, formed by a steric zipper of superposed beta-strands. Soluble oligomers may represent an intermediate stage on the path to fibril formation. Copper binding may promote oligomerization. Interacts with GRB2, APP, ERI3/PRNPIP and SYN1. Mislocalized cytosolically exposed PrP interacts with MGRN1; this interaction alters MGRN1 subcellular location and causes lysosomal enlargement. Interacts with KIAA1191.</text>
</comment>
<comment type="interaction">
    <interactant intactId="EBI-15889930">
        <id>Q95211</id>
    </interactant>
    <interactant intactId="EBI-15889930">
        <id>Q95211</id>
        <label>PRNP</label>
    </interactant>
    <organismsDiffer>false</organismsDiffer>
    <experiments>2</experiments>
</comment>
<comment type="subcellular location">
    <subcellularLocation>
        <location evidence="1">Cell membrane</location>
        <topology evidence="1">Lipid-anchor</topology>
        <topology evidence="1">GPI-anchor</topology>
    </subcellularLocation>
    <subcellularLocation>
        <location evidence="2">Golgi apparatus</location>
    </subcellularLocation>
    <text evidence="1">Targeted to lipid rafts via association with the heparan sulfate chains of GPC1. Colocates, in the presence of Cu(2+), to vesicles in para- and perinuclear regions, where both proteins undergo internalization. Heparin displaces PRNP from lipid rafts and promotes endocytosis.</text>
</comment>
<comment type="domain">
    <text evidence="1">The normal, monomeric form has a mainly alpha-helical structure. The disease-associated, protease-resistant form forms amyloid fibrils containing a cross-beta spine, formed by a steric zipper of superposed beta-strands. Disease mutations may favor intermolecular contacts via short beta strands, and may thereby trigger oligomerization.</text>
</comment>
<comment type="domain">
    <text evidence="1">Contains an N-terminal region composed of octamer repeats. At low copper concentrations, the sidechains of His residues from three or four repeats contribute to the binding of a single copper ion. Alternatively, a copper ion can be bound by interaction with the sidechain and backbone amide nitrogen of a single His residue. The observed copper binding stoichiometry suggests that two repeat regions cooperate to stabilize the binding of a single copper ion. At higher copper concentrations, each octamer can bind one copper ion by interactions with the His sidechain and Gly backbone atoms. A mixture of binding types may occur, especially in the case of octamer repeat expansion. Copper binding may stabilize the conformation of this region and may promote oligomerization.</text>
</comment>
<comment type="disease">
    <text evidence="6">Found in high quantity in the brain of humans and animals infected with degenerative neurological diseases such as kuru, Creutzfeldt-Jakob disease (CJD), Gerstmann-Straussler syndrome (GSS), scrapie, bovine spongiform encephalopathy (BSE), transmissible mink encephalopathy (TME), etc.</text>
</comment>
<comment type="similarity">
    <text evidence="6">Belongs to the prion family.</text>
</comment>
<evidence type="ECO:0000250" key="1">
    <source>
        <dbReference type="UniProtKB" id="P04156"/>
    </source>
</evidence>
<evidence type="ECO:0000250" key="2">
    <source>
        <dbReference type="UniProtKB" id="P04925"/>
    </source>
</evidence>
<evidence type="ECO:0000255" key="3"/>
<evidence type="ECO:0000256" key="4">
    <source>
        <dbReference type="SAM" id="MobiDB-lite"/>
    </source>
</evidence>
<evidence type="ECO:0000269" key="5">
    <source>
    </source>
</evidence>
<evidence type="ECO:0000305" key="6"/>
<evidence type="ECO:0007829" key="7">
    <source>
        <dbReference type="PDB" id="2FJ3"/>
    </source>
</evidence>
<evidence type="ECO:0007829" key="8">
    <source>
        <dbReference type="PDB" id="2JOH"/>
    </source>
</evidence>
<evidence type="ECO:0007829" key="9">
    <source>
        <dbReference type="PDB" id="4HLS"/>
    </source>
</evidence>
<evidence type="ECO:0007829" key="10">
    <source>
        <dbReference type="PDB" id="4HMM"/>
    </source>
</evidence>
<proteinExistence type="evidence at protein level"/>
<feature type="signal peptide" evidence="3">
    <location>
        <begin position="1"/>
        <end position="28"/>
    </location>
</feature>
<feature type="chain" id="PRO_0000025721" description="Major prion protein">
    <location>
        <begin position="29"/>
        <end position="229"/>
    </location>
</feature>
<feature type="propeptide" id="PRO_0000025722" description="Removed in mature form" evidence="3">
    <location>
        <begin position="230"/>
        <end position="252"/>
    </location>
</feature>
<feature type="repeat" description="1">
    <location>
        <begin position="51"/>
        <end position="59"/>
    </location>
</feature>
<feature type="repeat" description="2">
    <location>
        <begin position="60"/>
        <end position="67"/>
    </location>
</feature>
<feature type="repeat" description="3">
    <location>
        <begin position="68"/>
        <end position="75"/>
    </location>
</feature>
<feature type="repeat" description="4">
    <location>
        <begin position="76"/>
        <end position="83"/>
    </location>
</feature>
<feature type="repeat" description="5">
    <location>
        <begin position="84"/>
        <end position="92"/>
    </location>
</feature>
<feature type="region of interest" description="Interaction with GRB2, ERI3 and SYN1" evidence="2">
    <location>
        <begin position="23"/>
        <end position="229"/>
    </location>
</feature>
<feature type="region of interest" description="Disordered" evidence="4">
    <location>
        <begin position="26"/>
        <end position="109"/>
    </location>
</feature>
<feature type="region of interest" description="5 X 8 AA tandem repeats of P-H-G-G-G-W-G-Q">
    <location>
        <begin position="51"/>
        <end position="92"/>
    </location>
</feature>
<feature type="compositionally biased region" description="Gly residues" evidence="4">
    <location>
        <begin position="53"/>
        <end position="93"/>
    </location>
</feature>
<feature type="binding site" evidence="1">
    <location>
        <position position="61"/>
    </location>
    <ligand>
        <name>Cu(2+)</name>
        <dbReference type="ChEBI" id="CHEBI:29036"/>
        <label>1</label>
    </ligand>
</feature>
<feature type="binding site" evidence="1">
    <location>
        <position position="62"/>
    </location>
    <ligand>
        <name>Cu(2+)</name>
        <dbReference type="ChEBI" id="CHEBI:29036"/>
        <label>1</label>
    </ligand>
</feature>
<feature type="binding site" evidence="1">
    <location>
        <position position="63"/>
    </location>
    <ligand>
        <name>Cu(2+)</name>
        <dbReference type="ChEBI" id="CHEBI:29036"/>
        <label>1</label>
    </ligand>
</feature>
<feature type="binding site" evidence="1">
    <location>
        <position position="69"/>
    </location>
    <ligand>
        <name>Cu(2+)</name>
        <dbReference type="ChEBI" id="CHEBI:29036"/>
        <label>2</label>
    </ligand>
</feature>
<feature type="binding site" evidence="1">
    <location>
        <position position="70"/>
    </location>
    <ligand>
        <name>Cu(2+)</name>
        <dbReference type="ChEBI" id="CHEBI:29036"/>
        <label>2</label>
    </ligand>
</feature>
<feature type="binding site" evidence="1">
    <location>
        <position position="71"/>
    </location>
    <ligand>
        <name>Cu(2+)</name>
        <dbReference type="ChEBI" id="CHEBI:29036"/>
        <label>2</label>
    </ligand>
</feature>
<feature type="binding site" evidence="1">
    <location>
        <position position="77"/>
    </location>
    <ligand>
        <name>Cu(2+)</name>
        <dbReference type="ChEBI" id="CHEBI:29036"/>
        <label>3</label>
    </ligand>
</feature>
<feature type="binding site" evidence="1">
    <location>
        <position position="78"/>
    </location>
    <ligand>
        <name>Cu(2+)</name>
        <dbReference type="ChEBI" id="CHEBI:29036"/>
        <label>3</label>
    </ligand>
</feature>
<feature type="binding site" evidence="1">
    <location>
        <position position="79"/>
    </location>
    <ligand>
        <name>Cu(2+)</name>
        <dbReference type="ChEBI" id="CHEBI:29036"/>
        <label>3</label>
    </ligand>
</feature>
<feature type="binding site" evidence="1">
    <location>
        <position position="85"/>
    </location>
    <ligand>
        <name>Cu(2+)</name>
        <dbReference type="ChEBI" id="CHEBI:29036"/>
        <label>4</label>
    </ligand>
</feature>
<feature type="binding site" evidence="1">
    <location>
        <position position="86"/>
    </location>
    <ligand>
        <name>Cu(2+)</name>
        <dbReference type="ChEBI" id="CHEBI:29036"/>
        <label>4</label>
    </ligand>
</feature>
<feature type="binding site" evidence="1">
    <location>
        <position position="87"/>
    </location>
    <ligand>
        <name>Cu(2+)</name>
        <dbReference type="ChEBI" id="CHEBI:29036"/>
        <label>4</label>
    </ligand>
</feature>
<feature type="lipid moiety-binding region" description="GPI-anchor amidated alanine" evidence="3">
    <location>
        <position position="229"/>
    </location>
</feature>
<feature type="glycosylation site" description="N-linked (GlcNAc...) asparagine" evidence="3">
    <location>
        <position position="180"/>
    </location>
</feature>
<feature type="glycosylation site" description="N-linked (GlcNAc...) asparagine" evidence="3">
    <location>
        <position position="196"/>
    </location>
</feature>
<feature type="disulfide bond" evidence="5">
    <location>
        <begin position="178"/>
        <end position="213"/>
    </location>
</feature>
<feature type="strand" evidence="7">
    <location>
        <begin position="128"/>
        <end position="130"/>
    </location>
</feature>
<feature type="turn" evidence="8">
    <location>
        <begin position="131"/>
        <end position="134"/>
    </location>
</feature>
<feature type="helix" evidence="9">
    <location>
        <begin position="143"/>
        <end position="152"/>
    </location>
</feature>
<feature type="helix" evidence="9">
    <location>
        <begin position="153"/>
        <end position="155"/>
    </location>
</feature>
<feature type="strand" evidence="10">
    <location>
        <begin position="161"/>
        <end position="163"/>
    </location>
</feature>
<feature type="helix" evidence="9">
    <location>
        <begin position="165"/>
        <end position="167"/>
    </location>
</feature>
<feature type="helix" evidence="9">
    <location>
        <begin position="171"/>
        <end position="191"/>
    </location>
</feature>
<feature type="turn" evidence="9">
    <location>
        <begin position="192"/>
        <end position="194"/>
    </location>
</feature>
<feature type="helix" evidence="9">
    <location>
        <begin position="199"/>
        <end position="220"/>
    </location>
</feature>
<feature type="helix" evidence="9">
    <location>
        <begin position="222"/>
        <end position="228"/>
    </location>
</feature>
<organism>
    <name type="scientific">Oryctolagus cuniculus</name>
    <name type="common">Rabbit</name>
    <dbReference type="NCBI Taxonomy" id="9986"/>
    <lineage>
        <taxon>Eukaryota</taxon>
        <taxon>Metazoa</taxon>
        <taxon>Chordata</taxon>
        <taxon>Craniata</taxon>
        <taxon>Vertebrata</taxon>
        <taxon>Euteleostomi</taxon>
        <taxon>Mammalia</taxon>
        <taxon>Eutheria</taxon>
        <taxon>Euarchontoglires</taxon>
        <taxon>Glires</taxon>
        <taxon>Lagomorpha</taxon>
        <taxon>Leporidae</taxon>
        <taxon>Oryctolagus</taxon>
    </lineage>
</organism>
<reference key="1">
    <citation type="journal article" date="1997" name="Gene">
        <title>Characterization of a prion protein (PrP) gene from rabbit; a species with apparent resistance to infection by prions.</title>
        <authorList>
            <person name="Loftus B."/>
            <person name="Rogers M."/>
        </authorList>
    </citation>
    <scope>NUCLEOTIDE SEQUENCE [GENOMIC DNA]</scope>
    <source>
        <strain>New Zealand white</strain>
    </source>
</reference>
<reference key="2">
    <citation type="journal article" date="2010" name="J. Biol. Chem.">
        <title>Unique structural characteristics of the rabbit prion protein.</title>
        <authorList>
            <person name="Wen Y."/>
            <person name="Li J."/>
            <person name="Yao W."/>
            <person name="Xiong M."/>
            <person name="Hong J."/>
            <person name="Peng Y."/>
            <person name="Xiao G."/>
            <person name="Lin D."/>
        </authorList>
    </citation>
    <scope>STRUCTURE BY NMR OF 91-228 OF WILD TYPE AND MUTANT ASN-173</scope>
    <scope>DISULFIDE BOND</scope>
</reference>
<protein>
    <recommendedName>
        <fullName>Major prion protein</fullName>
        <shortName>PrP</shortName>
    </recommendedName>
    <alternativeName>
        <fullName>PrP27-30</fullName>
    </alternativeName>
    <alternativeName>
        <fullName>PrP33-35C</fullName>
    </alternativeName>
    <cdAntigenName>CD230</cdAntigenName>
</protein>
<accession>Q95211</accession>
<keyword id="KW-0002">3D-structure</keyword>
<keyword id="KW-0034">Amyloid</keyword>
<keyword id="KW-1003">Cell membrane</keyword>
<keyword id="KW-0186">Copper</keyword>
<keyword id="KW-1015">Disulfide bond</keyword>
<keyword id="KW-0325">Glycoprotein</keyword>
<keyword id="KW-0333">Golgi apparatus</keyword>
<keyword id="KW-0336">GPI-anchor</keyword>
<keyword id="KW-0449">Lipoprotein</keyword>
<keyword id="KW-0472">Membrane</keyword>
<keyword id="KW-0479">Metal-binding</keyword>
<keyword id="KW-0640">Prion</keyword>
<keyword id="KW-1185">Reference proteome</keyword>
<keyword id="KW-0677">Repeat</keyword>
<keyword id="KW-0732">Signal</keyword>
<keyword id="KW-0862">Zinc</keyword>
<dbReference type="EMBL" id="U28334">
    <property type="protein sequence ID" value="AAC48697.1"/>
    <property type="molecule type" value="Genomic_DNA"/>
</dbReference>
<dbReference type="PIR" id="JC6175">
    <property type="entry name" value="JC6175"/>
</dbReference>
<dbReference type="RefSeq" id="XP_008254357.1">
    <property type="nucleotide sequence ID" value="XM_008256135.4"/>
</dbReference>
<dbReference type="RefSeq" id="XP_008254358.1">
    <property type="nucleotide sequence ID" value="XM_008256136.4"/>
</dbReference>
<dbReference type="PDB" id="2FJ3">
    <property type="method" value="NMR"/>
    <property type="chains" value="A=91-228"/>
</dbReference>
<dbReference type="PDB" id="2JOH">
    <property type="method" value="NMR"/>
    <property type="chains" value="A=91-228"/>
</dbReference>
<dbReference type="PDB" id="2JOM">
    <property type="method" value="NMR"/>
    <property type="chains" value="A=91-228"/>
</dbReference>
<dbReference type="PDB" id="4HLS">
    <property type="method" value="X-ray"/>
    <property type="resolution" value="1.45 A"/>
    <property type="chains" value="A/B=119-229"/>
</dbReference>
<dbReference type="PDB" id="4HMM">
    <property type="method" value="X-ray"/>
    <property type="resolution" value="1.50 A"/>
    <property type="chains" value="A/B=119-229"/>
</dbReference>
<dbReference type="PDB" id="4HMR">
    <property type="method" value="X-ray"/>
    <property type="resolution" value="1.60 A"/>
    <property type="chains" value="A/B=119-229"/>
</dbReference>
<dbReference type="PDB" id="7RVG">
    <property type="method" value="EM"/>
    <property type="resolution" value="1.00 A"/>
    <property type="chains" value="A=167-175"/>
</dbReference>
<dbReference type="PDBsum" id="2FJ3"/>
<dbReference type="PDBsum" id="2JOH"/>
<dbReference type="PDBsum" id="2JOM"/>
<dbReference type="PDBsum" id="4HLS"/>
<dbReference type="PDBsum" id="4HMM"/>
<dbReference type="PDBsum" id="4HMR"/>
<dbReference type="PDBsum" id="7RVG"/>
<dbReference type="BMRB" id="Q95211"/>
<dbReference type="SMR" id="Q95211"/>
<dbReference type="DIP" id="DIP-59794N"/>
<dbReference type="FunCoup" id="Q95211">
    <property type="interactions" value="279"/>
</dbReference>
<dbReference type="STRING" id="9986.ENSOCUP00000001797"/>
<dbReference type="GlyCosmos" id="Q95211">
    <property type="glycosylation" value="2 sites, No reported glycans"/>
</dbReference>
<dbReference type="PaxDb" id="9986-ENSOCUP00000001797"/>
<dbReference type="Ensembl" id="ENSOCUT00000002082.1">
    <property type="protein sequence ID" value="ENSOCUP00000001797.1"/>
    <property type="gene ID" value="ENSOCUG00000002086.1"/>
</dbReference>
<dbReference type="GeneID" id="100008658"/>
<dbReference type="CTD" id="5621"/>
<dbReference type="eggNOG" id="ENOG502S2A8">
    <property type="taxonomic scope" value="Eukaryota"/>
</dbReference>
<dbReference type="GeneTree" id="ENSGT00510000049083"/>
<dbReference type="HOGENOM" id="CLU_094631_0_0_1"/>
<dbReference type="InParanoid" id="Q95211"/>
<dbReference type="OMA" id="QMCTTQY"/>
<dbReference type="OrthoDB" id="9048788at2759"/>
<dbReference type="TreeFam" id="TF105188"/>
<dbReference type="EvolutionaryTrace" id="Q95211"/>
<dbReference type="Proteomes" id="UP000001811">
    <property type="component" value="Chromosome 4"/>
</dbReference>
<dbReference type="Bgee" id="ENSOCUG00000002086">
    <property type="expression patterns" value="Expressed in prefrontal cortex and 6 other cell types or tissues"/>
</dbReference>
<dbReference type="GO" id="GO:0009986">
    <property type="term" value="C:cell surface"/>
    <property type="evidence" value="ECO:0007669"/>
    <property type="project" value="Ensembl"/>
</dbReference>
<dbReference type="GO" id="GO:0005829">
    <property type="term" value="C:cytosol"/>
    <property type="evidence" value="ECO:0007669"/>
    <property type="project" value="Ensembl"/>
</dbReference>
<dbReference type="GO" id="GO:0030425">
    <property type="term" value="C:dendrite"/>
    <property type="evidence" value="ECO:0007669"/>
    <property type="project" value="Ensembl"/>
</dbReference>
<dbReference type="GO" id="GO:0005783">
    <property type="term" value="C:endoplasmic reticulum"/>
    <property type="evidence" value="ECO:0007669"/>
    <property type="project" value="Ensembl"/>
</dbReference>
<dbReference type="GO" id="GO:0005794">
    <property type="term" value="C:Golgi apparatus"/>
    <property type="evidence" value="ECO:0007669"/>
    <property type="project" value="UniProtKB-SubCell"/>
</dbReference>
<dbReference type="GO" id="GO:0016234">
    <property type="term" value="C:inclusion body"/>
    <property type="evidence" value="ECO:0007669"/>
    <property type="project" value="Ensembl"/>
</dbReference>
<dbReference type="GO" id="GO:0045121">
    <property type="term" value="C:membrane raft"/>
    <property type="evidence" value="ECO:0007669"/>
    <property type="project" value="Ensembl"/>
</dbReference>
<dbReference type="GO" id="GO:0031965">
    <property type="term" value="C:nuclear membrane"/>
    <property type="evidence" value="ECO:0007669"/>
    <property type="project" value="Ensembl"/>
</dbReference>
<dbReference type="GO" id="GO:0005886">
    <property type="term" value="C:plasma membrane"/>
    <property type="evidence" value="ECO:0007669"/>
    <property type="project" value="UniProtKB-SubCell"/>
</dbReference>
<dbReference type="GO" id="GO:0098552">
    <property type="term" value="C:side of membrane"/>
    <property type="evidence" value="ECO:0007669"/>
    <property type="project" value="UniProtKB-KW"/>
</dbReference>
<dbReference type="GO" id="GO:0043195">
    <property type="term" value="C:terminal bouton"/>
    <property type="evidence" value="ECO:0007669"/>
    <property type="project" value="Ensembl"/>
</dbReference>
<dbReference type="GO" id="GO:0001540">
    <property type="term" value="F:amyloid-beta binding"/>
    <property type="evidence" value="ECO:0007669"/>
    <property type="project" value="Ensembl"/>
</dbReference>
<dbReference type="GO" id="GO:0019828">
    <property type="term" value="F:aspartic-type endopeptidase inhibitor activity"/>
    <property type="evidence" value="ECO:0007669"/>
    <property type="project" value="Ensembl"/>
</dbReference>
<dbReference type="GO" id="GO:0005507">
    <property type="term" value="F:copper ion binding"/>
    <property type="evidence" value="ECO:0000250"/>
    <property type="project" value="UniProtKB"/>
</dbReference>
<dbReference type="GO" id="GO:1903135">
    <property type="term" value="F:cupric ion binding"/>
    <property type="evidence" value="ECO:0007669"/>
    <property type="project" value="Ensembl"/>
</dbReference>
<dbReference type="GO" id="GO:1903136">
    <property type="term" value="F:cuprous ion binding"/>
    <property type="evidence" value="ECO:0007669"/>
    <property type="project" value="Ensembl"/>
</dbReference>
<dbReference type="GO" id="GO:0005539">
    <property type="term" value="F:glycosaminoglycan binding"/>
    <property type="evidence" value="ECO:0007669"/>
    <property type="project" value="Ensembl"/>
</dbReference>
<dbReference type="GO" id="GO:0042802">
    <property type="term" value="F:identical protein binding"/>
    <property type="evidence" value="ECO:0000353"/>
    <property type="project" value="IntAct"/>
</dbReference>
<dbReference type="GO" id="GO:0008017">
    <property type="term" value="F:microtubule binding"/>
    <property type="evidence" value="ECO:0007669"/>
    <property type="project" value="Ensembl"/>
</dbReference>
<dbReference type="GO" id="GO:0140693">
    <property type="term" value="F:molecular condensate scaffold activity"/>
    <property type="evidence" value="ECO:0007669"/>
    <property type="project" value="Ensembl"/>
</dbReference>
<dbReference type="GO" id="GO:0140677">
    <property type="term" value="F:molecular function activator activity"/>
    <property type="evidence" value="ECO:0007669"/>
    <property type="project" value="Ensembl"/>
</dbReference>
<dbReference type="GO" id="GO:0002020">
    <property type="term" value="F:protease binding"/>
    <property type="evidence" value="ECO:0007669"/>
    <property type="project" value="Ensembl"/>
</dbReference>
<dbReference type="GO" id="GO:0044877">
    <property type="term" value="F:protein-containing complex binding"/>
    <property type="evidence" value="ECO:0007669"/>
    <property type="project" value="Ensembl"/>
</dbReference>
<dbReference type="GO" id="GO:0038023">
    <property type="term" value="F:signaling receptor activity"/>
    <property type="evidence" value="ECO:0007669"/>
    <property type="project" value="Ensembl"/>
</dbReference>
<dbReference type="GO" id="GO:0031802">
    <property type="term" value="F:type 5 metabotropic glutamate receptor binding"/>
    <property type="evidence" value="ECO:0007669"/>
    <property type="project" value="Ensembl"/>
</dbReference>
<dbReference type="GO" id="GO:1904646">
    <property type="term" value="P:cellular response to amyloid-beta"/>
    <property type="evidence" value="ECO:0007669"/>
    <property type="project" value="Ensembl"/>
</dbReference>
<dbReference type="GO" id="GO:0071280">
    <property type="term" value="P:cellular response to copper ion"/>
    <property type="evidence" value="ECO:0007669"/>
    <property type="project" value="Ensembl"/>
</dbReference>
<dbReference type="GO" id="GO:0071466">
    <property type="term" value="P:cellular response to xenobiotic stimulus"/>
    <property type="evidence" value="ECO:0007669"/>
    <property type="project" value="Ensembl"/>
</dbReference>
<dbReference type="GO" id="GO:0035556">
    <property type="term" value="P:intracellular signal transduction"/>
    <property type="evidence" value="ECO:0007669"/>
    <property type="project" value="Ensembl"/>
</dbReference>
<dbReference type="GO" id="GO:0007611">
    <property type="term" value="P:learning or memory"/>
    <property type="evidence" value="ECO:0007669"/>
    <property type="project" value="Ensembl"/>
</dbReference>
<dbReference type="GO" id="GO:0046007">
    <property type="term" value="P:negative regulation of activated T cell proliferation"/>
    <property type="evidence" value="ECO:0007669"/>
    <property type="project" value="Ensembl"/>
</dbReference>
<dbReference type="GO" id="GO:1902430">
    <property type="term" value="P:negative regulation of amyloid-beta formation"/>
    <property type="evidence" value="ECO:0007669"/>
    <property type="project" value="Ensembl"/>
</dbReference>
<dbReference type="GO" id="GO:0043066">
    <property type="term" value="P:negative regulation of apoptotic process"/>
    <property type="evidence" value="ECO:0007669"/>
    <property type="project" value="Ensembl"/>
</dbReference>
<dbReference type="GO" id="GO:0070885">
    <property type="term" value="P:negative regulation of calcineurin-NFAT signaling cascade"/>
    <property type="evidence" value="ECO:0007669"/>
    <property type="project" value="Ensembl"/>
</dbReference>
<dbReference type="GO" id="GO:1902951">
    <property type="term" value="P:negative regulation of dendritic spine maintenance"/>
    <property type="evidence" value="ECO:0007669"/>
    <property type="project" value="Ensembl"/>
</dbReference>
<dbReference type="GO" id="GO:0032700">
    <property type="term" value="P:negative regulation of interleukin-17 production"/>
    <property type="evidence" value="ECO:0007669"/>
    <property type="project" value="Ensembl"/>
</dbReference>
<dbReference type="GO" id="GO:0032703">
    <property type="term" value="P:negative regulation of interleukin-2 production"/>
    <property type="evidence" value="ECO:0007669"/>
    <property type="project" value="Ensembl"/>
</dbReference>
<dbReference type="GO" id="GO:0050860">
    <property type="term" value="P:negative regulation of T cell receptor signaling pathway"/>
    <property type="evidence" value="ECO:0007669"/>
    <property type="project" value="Ensembl"/>
</dbReference>
<dbReference type="GO" id="GO:0000122">
    <property type="term" value="P:negative regulation of transcription by RNA polymerase II"/>
    <property type="evidence" value="ECO:0007669"/>
    <property type="project" value="Ensembl"/>
</dbReference>
<dbReference type="GO" id="GO:0032689">
    <property type="term" value="P:negative regulation of type II interferon production"/>
    <property type="evidence" value="ECO:0007669"/>
    <property type="project" value="Ensembl"/>
</dbReference>
<dbReference type="GO" id="GO:1990535">
    <property type="term" value="P:neuron projection maintenance"/>
    <property type="evidence" value="ECO:0007669"/>
    <property type="project" value="Ensembl"/>
</dbReference>
<dbReference type="GO" id="GO:0050850">
    <property type="term" value="P:positive regulation of calcium-mediated signaling"/>
    <property type="evidence" value="ECO:0007669"/>
    <property type="project" value="Ensembl"/>
</dbReference>
<dbReference type="GO" id="GO:1900451">
    <property type="term" value="P:positive regulation of glutamate receptor signaling pathway"/>
    <property type="evidence" value="ECO:0007669"/>
    <property type="project" value="Ensembl"/>
</dbReference>
<dbReference type="GO" id="GO:0043525">
    <property type="term" value="P:positive regulation of neuron apoptotic process"/>
    <property type="evidence" value="ECO:0007669"/>
    <property type="project" value="Ensembl"/>
</dbReference>
<dbReference type="GO" id="GO:1903078">
    <property type="term" value="P:positive regulation of protein localization to plasma membrane"/>
    <property type="evidence" value="ECO:0007669"/>
    <property type="project" value="Ensembl"/>
</dbReference>
<dbReference type="GO" id="GO:0090314">
    <property type="term" value="P:positive regulation of protein targeting to membrane"/>
    <property type="evidence" value="ECO:0007669"/>
    <property type="project" value="Ensembl"/>
</dbReference>
<dbReference type="GO" id="GO:0031648">
    <property type="term" value="P:protein destabilization"/>
    <property type="evidence" value="ECO:0007669"/>
    <property type="project" value="Ensembl"/>
</dbReference>
<dbReference type="GO" id="GO:0051260">
    <property type="term" value="P:protein homooligomerization"/>
    <property type="evidence" value="ECO:0007669"/>
    <property type="project" value="InterPro"/>
</dbReference>
<dbReference type="GO" id="GO:1905664">
    <property type="term" value="P:regulation of calcium ion import across plasma membrane"/>
    <property type="evidence" value="ECO:0007669"/>
    <property type="project" value="Ensembl"/>
</dbReference>
<dbReference type="GO" id="GO:1901379">
    <property type="term" value="P:regulation of potassium ion transmembrane transport"/>
    <property type="evidence" value="ECO:0007669"/>
    <property type="project" value="Ensembl"/>
</dbReference>
<dbReference type="GO" id="GO:0006979">
    <property type="term" value="P:response to oxidative stress"/>
    <property type="evidence" value="ECO:0007669"/>
    <property type="project" value="Ensembl"/>
</dbReference>
<dbReference type="FunFam" id="1.10.790.10:FF:000001">
    <property type="entry name" value="Major prion protein"/>
    <property type="match status" value="1"/>
</dbReference>
<dbReference type="Gene3D" id="1.10.790.10">
    <property type="entry name" value="Prion/Doppel protein, beta-ribbon domain"/>
    <property type="match status" value="1"/>
</dbReference>
<dbReference type="InterPro" id="IPR000817">
    <property type="entry name" value="Prion"/>
</dbReference>
<dbReference type="InterPro" id="IPR036924">
    <property type="entry name" value="Prion/Doppel_b-ribbon_dom_sf"/>
</dbReference>
<dbReference type="InterPro" id="IPR022416">
    <property type="entry name" value="Prion/Doppel_prot_b-ribbon_dom"/>
</dbReference>
<dbReference type="InterPro" id="IPR020949">
    <property type="entry name" value="Prion_copper_b_octapeptide"/>
</dbReference>
<dbReference type="InterPro" id="IPR025860">
    <property type="entry name" value="Prion_N"/>
</dbReference>
<dbReference type="PANTHER" id="PTHR15506">
    <property type="entry name" value="DOPPEL PRION"/>
    <property type="match status" value="1"/>
</dbReference>
<dbReference type="PANTHER" id="PTHR15506:SF2">
    <property type="entry name" value="MAJOR PRION PROTEIN"/>
    <property type="match status" value="1"/>
</dbReference>
<dbReference type="Pfam" id="PF00377">
    <property type="entry name" value="Prion"/>
    <property type="match status" value="1"/>
</dbReference>
<dbReference type="Pfam" id="PF11587">
    <property type="entry name" value="Prion_bPrPp"/>
    <property type="match status" value="1"/>
</dbReference>
<dbReference type="Pfam" id="PF03991">
    <property type="entry name" value="Prion_octapep"/>
    <property type="match status" value="1"/>
</dbReference>
<dbReference type="PRINTS" id="PR00341">
    <property type="entry name" value="PRION"/>
</dbReference>
<dbReference type="SMART" id="SM00157">
    <property type="entry name" value="PRP"/>
    <property type="match status" value="1"/>
</dbReference>
<dbReference type="SUPFAM" id="SSF54098">
    <property type="entry name" value="Prion-like"/>
    <property type="match status" value="1"/>
</dbReference>
<dbReference type="PROSITE" id="PS00291">
    <property type="entry name" value="PRION_1"/>
    <property type="match status" value="1"/>
</dbReference>
<dbReference type="PROSITE" id="PS00706">
    <property type="entry name" value="PRION_2"/>
    <property type="match status" value="1"/>
</dbReference>
<name>PRIO_RABIT</name>
<sequence length="252" mass="27432">MAHLGYWMLLLFVATWSDVGLCKKRPKPGGGWNTGGSRYPGQSSPGGNRYPPQGGGWGQPHGGGWGQPHGGGWGQPHGGGWGQPHGGGWGQGGTHNQWGKPSKPKTSMKHVAGAAAAGAVVGGLGGYMLGSAMSRPLIHFGNDYEDRYYRENMYRYPNQVYYRPVDQYSNQNSFVHDCVNITVKQHTVTTTTKGENFTETDIKIMERVVEQMCITQYQQESQAAYQRAAGVLLFSSPPVILLISFLIFLIVG</sequence>
<gene>
    <name type="primary">PRNP</name>
    <name type="synonym">PRP</name>
</gene>